<evidence type="ECO:0000255" key="1">
    <source>
        <dbReference type="HAMAP-Rule" id="MF_01037"/>
    </source>
</evidence>
<sequence>MTTQVVNVIGAGLAGSEAAYQIAKRGVQVRLYEMRPVRQTPAHHTDKFAELVCSNSLRANTLTNAVGVIKEEMRLMDSVIIRAADECSVPAGGALAVDRHEFAAKVTEYVKNHPNVTVVNEEITEIPEGPTVIATGPLTSPDLSAQLKELTGEDYFYFYDAAAPIVEKDSIDMNKVYLKSRYDKGEAAYLNCPMTEEEFDRFYEALIAAETVPLKEFEKEIFFEGCMPVEVMASRGRQTLVFGPMKPVGLEDPKTGKTPYAVVQLRQDDAAGTLYNIVGFQTHLKWGPQKEVLQLIPGLENAEIVRYGVMHRNTFINSPNLLRPTYQYKQRDDLFFAGQMTGVEGYVESAASGLLAGINAARLVKGEEPVVLPPVTAMGSMANYITATNAKNFQPMNANFGLFAPLEKKIKKKAERNEAYATRALETIRNFVNI</sequence>
<protein>
    <recommendedName>
        <fullName evidence="1">Methylenetetrahydrofolate--tRNA-(uracil-5-)-methyltransferase TrmFO</fullName>
        <ecNumber evidence="1">2.1.1.74</ecNumber>
    </recommendedName>
    <alternativeName>
        <fullName evidence="1">Folate-dependent tRNA (uracil-5-)-methyltransferase</fullName>
    </alternativeName>
    <alternativeName>
        <fullName evidence="1">Folate-dependent tRNA(M-5-U54)-methyltransferase</fullName>
    </alternativeName>
</protein>
<dbReference type="EC" id="2.1.1.74" evidence="1"/>
<dbReference type="EMBL" id="CP001177">
    <property type="protein sequence ID" value="ACJ78783.1"/>
    <property type="molecule type" value="Genomic_DNA"/>
</dbReference>
<dbReference type="SMR" id="B7HLG5"/>
<dbReference type="KEGG" id="bcr:BCAH187_A3879"/>
<dbReference type="HOGENOM" id="CLU_033057_1_0_9"/>
<dbReference type="Proteomes" id="UP000002214">
    <property type="component" value="Chromosome"/>
</dbReference>
<dbReference type="GO" id="GO:0005829">
    <property type="term" value="C:cytosol"/>
    <property type="evidence" value="ECO:0007669"/>
    <property type="project" value="TreeGrafter"/>
</dbReference>
<dbReference type="GO" id="GO:0050660">
    <property type="term" value="F:flavin adenine dinucleotide binding"/>
    <property type="evidence" value="ECO:0007669"/>
    <property type="project" value="UniProtKB-UniRule"/>
</dbReference>
<dbReference type="GO" id="GO:0047151">
    <property type="term" value="F:tRNA (uracil(54)-C5)-methyltransferase activity, 5,10-methylenetetrahydrofolate-dependent"/>
    <property type="evidence" value="ECO:0007669"/>
    <property type="project" value="UniProtKB-UniRule"/>
</dbReference>
<dbReference type="GO" id="GO:0030488">
    <property type="term" value="P:tRNA methylation"/>
    <property type="evidence" value="ECO:0007669"/>
    <property type="project" value="TreeGrafter"/>
</dbReference>
<dbReference type="GO" id="GO:0002098">
    <property type="term" value="P:tRNA wobble uridine modification"/>
    <property type="evidence" value="ECO:0007669"/>
    <property type="project" value="TreeGrafter"/>
</dbReference>
<dbReference type="FunFam" id="3.50.50.60:FF:000035">
    <property type="entry name" value="Methylenetetrahydrofolate--tRNA-(uracil-5-)-methyltransferase TrmFO"/>
    <property type="match status" value="1"/>
</dbReference>
<dbReference type="FunFam" id="3.50.50.60:FF:000040">
    <property type="entry name" value="Methylenetetrahydrofolate--tRNA-(uracil-5-)-methyltransferase TrmFO"/>
    <property type="match status" value="1"/>
</dbReference>
<dbReference type="Gene3D" id="3.50.50.60">
    <property type="entry name" value="FAD/NAD(P)-binding domain"/>
    <property type="match status" value="2"/>
</dbReference>
<dbReference type="HAMAP" id="MF_01037">
    <property type="entry name" value="TrmFO"/>
    <property type="match status" value="1"/>
</dbReference>
<dbReference type="InterPro" id="IPR036188">
    <property type="entry name" value="FAD/NAD-bd_sf"/>
</dbReference>
<dbReference type="InterPro" id="IPR002218">
    <property type="entry name" value="MnmG-rel"/>
</dbReference>
<dbReference type="InterPro" id="IPR020595">
    <property type="entry name" value="MnmG-rel_CS"/>
</dbReference>
<dbReference type="InterPro" id="IPR040131">
    <property type="entry name" value="MnmG_N"/>
</dbReference>
<dbReference type="InterPro" id="IPR004417">
    <property type="entry name" value="TrmFO"/>
</dbReference>
<dbReference type="NCBIfam" id="TIGR00137">
    <property type="entry name" value="gid_trmFO"/>
    <property type="match status" value="1"/>
</dbReference>
<dbReference type="NCBIfam" id="NF003739">
    <property type="entry name" value="PRK05335.1"/>
    <property type="match status" value="1"/>
</dbReference>
<dbReference type="PANTHER" id="PTHR11806">
    <property type="entry name" value="GLUCOSE INHIBITED DIVISION PROTEIN A"/>
    <property type="match status" value="1"/>
</dbReference>
<dbReference type="PANTHER" id="PTHR11806:SF2">
    <property type="entry name" value="METHYLENETETRAHYDROFOLATE--TRNA-(URACIL-5-)-METHYLTRANSFERASE TRMFO"/>
    <property type="match status" value="1"/>
</dbReference>
<dbReference type="Pfam" id="PF01134">
    <property type="entry name" value="GIDA"/>
    <property type="match status" value="1"/>
</dbReference>
<dbReference type="SUPFAM" id="SSF51905">
    <property type="entry name" value="FAD/NAD(P)-binding domain"/>
    <property type="match status" value="1"/>
</dbReference>
<dbReference type="PROSITE" id="PS01281">
    <property type="entry name" value="GIDA_2"/>
    <property type="match status" value="1"/>
</dbReference>
<feature type="chain" id="PRO_1000135889" description="Methylenetetrahydrofolate--tRNA-(uracil-5-)-methyltransferase TrmFO">
    <location>
        <begin position="1"/>
        <end position="434"/>
    </location>
</feature>
<feature type="binding site" evidence="1">
    <location>
        <begin position="10"/>
        <end position="15"/>
    </location>
    <ligand>
        <name>FAD</name>
        <dbReference type="ChEBI" id="CHEBI:57692"/>
    </ligand>
</feature>
<gene>
    <name evidence="1" type="primary">trmFO</name>
    <name type="ordered locus">BCAH187_A3879</name>
</gene>
<comment type="function">
    <text evidence="1">Catalyzes the folate-dependent formation of 5-methyl-uridine at position 54 (M-5-U54) in all tRNAs.</text>
</comment>
<comment type="catalytic activity">
    <reaction evidence="1">
        <text>uridine(54) in tRNA + (6R)-5,10-methylene-5,6,7,8-tetrahydrofolate + NADH + H(+) = 5-methyluridine(54) in tRNA + (6S)-5,6,7,8-tetrahydrofolate + NAD(+)</text>
        <dbReference type="Rhea" id="RHEA:16873"/>
        <dbReference type="Rhea" id="RHEA-COMP:10167"/>
        <dbReference type="Rhea" id="RHEA-COMP:10193"/>
        <dbReference type="ChEBI" id="CHEBI:15378"/>
        <dbReference type="ChEBI" id="CHEBI:15636"/>
        <dbReference type="ChEBI" id="CHEBI:57453"/>
        <dbReference type="ChEBI" id="CHEBI:57540"/>
        <dbReference type="ChEBI" id="CHEBI:57945"/>
        <dbReference type="ChEBI" id="CHEBI:65315"/>
        <dbReference type="ChEBI" id="CHEBI:74447"/>
        <dbReference type="EC" id="2.1.1.74"/>
    </reaction>
</comment>
<comment type="catalytic activity">
    <reaction evidence="1">
        <text>uridine(54) in tRNA + (6R)-5,10-methylene-5,6,7,8-tetrahydrofolate + NADPH + H(+) = 5-methyluridine(54) in tRNA + (6S)-5,6,7,8-tetrahydrofolate + NADP(+)</text>
        <dbReference type="Rhea" id="RHEA:62372"/>
        <dbReference type="Rhea" id="RHEA-COMP:10167"/>
        <dbReference type="Rhea" id="RHEA-COMP:10193"/>
        <dbReference type="ChEBI" id="CHEBI:15378"/>
        <dbReference type="ChEBI" id="CHEBI:15636"/>
        <dbReference type="ChEBI" id="CHEBI:57453"/>
        <dbReference type="ChEBI" id="CHEBI:57783"/>
        <dbReference type="ChEBI" id="CHEBI:58349"/>
        <dbReference type="ChEBI" id="CHEBI:65315"/>
        <dbReference type="ChEBI" id="CHEBI:74447"/>
        <dbReference type="EC" id="2.1.1.74"/>
    </reaction>
</comment>
<comment type="cofactor">
    <cofactor evidence="1">
        <name>FAD</name>
        <dbReference type="ChEBI" id="CHEBI:57692"/>
    </cofactor>
</comment>
<comment type="subcellular location">
    <subcellularLocation>
        <location evidence="1">Cytoplasm</location>
    </subcellularLocation>
</comment>
<comment type="similarity">
    <text evidence="1">Belongs to the MnmG family. TrmFO subfamily.</text>
</comment>
<keyword id="KW-0963">Cytoplasm</keyword>
<keyword id="KW-0274">FAD</keyword>
<keyword id="KW-0285">Flavoprotein</keyword>
<keyword id="KW-0489">Methyltransferase</keyword>
<keyword id="KW-0520">NAD</keyword>
<keyword id="KW-0521">NADP</keyword>
<keyword id="KW-0808">Transferase</keyword>
<keyword id="KW-0819">tRNA processing</keyword>
<name>TRMFO_BACC7</name>
<proteinExistence type="inferred from homology"/>
<accession>B7HLG5</accession>
<organism>
    <name type="scientific">Bacillus cereus (strain AH187)</name>
    <dbReference type="NCBI Taxonomy" id="405534"/>
    <lineage>
        <taxon>Bacteria</taxon>
        <taxon>Bacillati</taxon>
        <taxon>Bacillota</taxon>
        <taxon>Bacilli</taxon>
        <taxon>Bacillales</taxon>
        <taxon>Bacillaceae</taxon>
        <taxon>Bacillus</taxon>
        <taxon>Bacillus cereus group</taxon>
    </lineage>
</organism>
<reference key="1">
    <citation type="submission" date="2008-10" db="EMBL/GenBank/DDBJ databases">
        <title>Genome sequence of Bacillus cereus AH187.</title>
        <authorList>
            <person name="Dodson R.J."/>
            <person name="Durkin A.S."/>
            <person name="Rosovitz M.J."/>
            <person name="Rasko D.A."/>
            <person name="Kolsto A.B."/>
            <person name="Okstad O.A."/>
            <person name="Ravel J."/>
            <person name="Sutton G."/>
        </authorList>
    </citation>
    <scope>NUCLEOTIDE SEQUENCE [LARGE SCALE GENOMIC DNA]</scope>
    <source>
        <strain>AH187</strain>
    </source>
</reference>